<evidence type="ECO:0000255" key="1">
    <source>
        <dbReference type="HAMAP-Rule" id="MF_00214"/>
    </source>
</evidence>
<gene>
    <name evidence="1" type="primary">aroD</name>
    <name type="ordered locus">MTH_566</name>
</gene>
<organism>
    <name type="scientific">Methanothermobacter thermautotrophicus (strain ATCC 29096 / DSM 1053 / JCM 10044 / NBRC 100330 / Delta H)</name>
    <name type="common">Methanobacterium thermoautotrophicum</name>
    <dbReference type="NCBI Taxonomy" id="187420"/>
    <lineage>
        <taxon>Archaea</taxon>
        <taxon>Methanobacteriati</taxon>
        <taxon>Methanobacteriota</taxon>
        <taxon>Methanomada group</taxon>
        <taxon>Methanobacteria</taxon>
        <taxon>Methanobacteriales</taxon>
        <taxon>Methanobacteriaceae</taxon>
        <taxon>Methanothermobacter</taxon>
    </lineage>
</organism>
<keyword id="KW-0028">Amino-acid biosynthesis</keyword>
<keyword id="KW-0057">Aromatic amino acid biosynthesis</keyword>
<keyword id="KW-0456">Lyase</keyword>
<keyword id="KW-1185">Reference proteome</keyword>
<keyword id="KW-0704">Schiff base</keyword>
<comment type="function">
    <text evidence="1">Involved in the third step of the chorismate pathway, which leads to the biosynthesis of aromatic amino acids. Catalyzes the cis-dehydration of 3-dehydroquinate (DHQ) and introduces the first double bond of the aromatic ring to yield 3-dehydroshikimate.</text>
</comment>
<comment type="catalytic activity">
    <reaction evidence="1">
        <text>3-dehydroquinate = 3-dehydroshikimate + H2O</text>
        <dbReference type="Rhea" id="RHEA:21096"/>
        <dbReference type="ChEBI" id="CHEBI:15377"/>
        <dbReference type="ChEBI" id="CHEBI:16630"/>
        <dbReference type="ChEBI" id="CHEBI:32364"/>
        <dbReference type="EC" id="4.2.1.10"/>
    </reaction>
</comment>
<comment type="pathway">
    <text evidence="1">Metabolic intermediate biosynthesis; chorismate biosynthesis; chorismate from D-erythrose 4-phosphate and phosphoenolpyruvate: step 3/7.</text>
</comment>
<comment type="subunit">
    <text evidence="1">Homodimer.</text>
</comment>
<comment type="similarity">
    <text evidence="1">Belongs to the type-I 3-dehydroquinase family.</text>
</comment>
<name>AROD_METTH</name>
<proteinExistence type="inferred from homology"/>
<protein>
    <recommendedName>
        <fullName evidence="1">3-dehydroquinate dehydratase</fullName>
        <shortName evidence="1">3-dehydroquinase</shortName>
        <ecNumber evidence="1">4.2.1.10</ecNumber>
    </recommendedName>
    <alternativeName>
        <fullName evidence="1">Type I DHQase</fullName>
    </alternativeName>
    <alternativeName>
        <fullName evidence="1">Type I dehydroquinase</fullName>
        <shortName evidence="1">DHQ1</shortName>
    </alternativeName>
</protein>
<sequence length="221" mass="23967">MNTKICVPVFEKTAPEVTESAGRAIDAGADILEIRIDGLQNPGEVNIRELIEDIGFPVIATNRSPVEGGHFSGSEDERIKLLMAAAEVADFVDIELSSAREDIERVTGSARRSIVSYHNFRETPSLEALLRIVRMAKEMGDIAKVAVMPENLADTLVVLQLLTFEEDTVAISMGELGKYTRVAAALFGSPITFASMGRGTAPGQMDVDVTRKMIGELMPED</sequence>
<dbReference type="EC" id="4.2.1.10" evidence="1"/>
<dbReference type="EMBL" id="AE000666">
    <property type="protein sequence ID" value="AAB85072.1"/>
    <property type="molecule type" value="Genomic_DNA"/>
</dbReference>
<dbReference type="PIR" id="H69174">
    <property type="entry name" value="H69174"/>
</dbReference>
<dbReference type="RefSeq" id="WP_010876205.1">
    <property type="nucleotide sequence ID" value="NC_000916.1"/>
</dbReference>
<dbReference type="SMR" id="O26666"/>
<dbReference type="FunCoup" id="O26666">
    <property type="interactions" value="73"/>
</dbReference>
<dbReference type="STRING" id="187420.MTH_566"/>
<dbReference type="PaxDb" id="187420-MTH_566"/>
<dbReference type="EnsemblBacteria" id="AAB85072">
    <property type="protein sequence ID" value="AAB85072"/>
    <property type="gene ID" value="MTH_566"/>
</dbReference>
<dbReference type="GeneID" id="1470527"/>
<dbReference type="GeneID" id="77401105"/>
<dbReference type="KEGG" id="mth:MTH_566"/>
<dbReference type="PATRIC" id="fig|187420.15.peg.545"/>
<dbReference type="HOGENOM" id="CLU_064444_2_1_2"/>
<dbReference type="InParanoid" id="O26666"/>
<dbReference type="UniPathway" id="UPA00053">
    <property type="reaction ID" value="UER00086"/>
</dbReference>
<dbReference type="Proteomes" id="UP000005223">
    <property type="component" value="Chromosome"/>
</dbReference>
<dbReference type="GO" id="GO:0003855">
    <property type="term" value="F:3-dehydroquinate dehydratase activity"/>
    <property type="evidence" value="ECO:0007669"/>
    <property type="project" value="UniProtKB-UniRule"/>
</dbReference>
<dbReference type="GO" id="GO:0046279">
    <property type="term" value="P:3,4-dihydroxybenzoate biosynthetic process"/>
    <property type="evidence" value="ECO:0007669"/>
    <property type="project" value="UniProtKB-ARBA"/>
</dbReference>
<dbReference type="GO" id="GO:0008652">
    <property type="term" value="P:amino acid biosynthetic process"/>
    <property type="evidence" value="ECO:0007669"/>
    <property type="project" value="UniProtKB-KW"/>
</dbReference>
<dbReference type="GO" id="GO:0009073">
    <property type="term" value="P:aromatic amino acid family biosynthetic process"/>
    <property type="evidence" value="ECO:0007669"/>
    <property type="project" value="UniProtKB-KW"/>
</dbReference>
<dbReference type="GO" id="GO:0009423">
    <property type="term" value="P:chorismate biosynthetic process"/>
    <property type="evidence" value="ECO:0007669"/>
    <property type="project" value="UniProtKB-UniRule"/>
</dbReference>
<dbReference type="CDD" id="cd00502">
    <property type="entry name" value="DHQase_I"/>
    <property type="match status" value="1"/>
</dbReference>
<dbReference type="Gene3D" id="3.20.20.70">
    <property type="entry name" value="Aldolase class I"/>
    <property type="match status" value="1"/>
</dbReference>
<dbReference type="HAMAP" id="MF_00214">
    <property type="entry name" value="AroD"/>
    <property type="match status" value="1"/>
</dbReference>
<dbReference type="InterPro" id="IPR013785">
    <property type="entry name" value="Aldolase_TIM"/>
</dbReference>
<dbReference type="InterPro" id="IPR001381">
    <property type="entry name" value="DHquinase_I"/>
</dbReference>
<dbReference type="InterPro" id="IPR050146">
    <property type="entry name" value="Type-I_3-dehydroquinase"/>
</dbReference>
<dbReference type="NCBIfam" id="TIGR01093">
    <property type="entry name" value="aroD"/>
    <property type="match status" value="1"/>
</dbReference>
<dbReference type="PANTHER" id="PTHR43699">
    <property type="entry name" value="3-DEHYDROQUINATE DEHYDRATASE"/>
    <property type="match status" value="1"/>
</dbReference>
<dbReference type="PANTHER" id="PTHR43699:SF1">
    <property type="entry name" value="3-DEHYDROQUINATE DEHYDRATASE"/>
    <property type="match status" value="1"/>
</dbReference>
<dbReference type="Pfam" id="PF01487">
    <property type="entry name" value="DHquinase_I"/>
    <property type="match status" value="1"/>
</dbReference>
<dbReference type="SUPFAM" id="SSF51569">
    <property type="entry name" value="Aldolase"/>
    <property type="match status" value="1"/>
</dbReference>
<feature type="chain" id="PRO_0000138832" description="3-dehydroquinate dehydratase">
    <location>
        <begin position="1"/>
        <end position="221"/>
    </location>
</feature>
<feature type="active site" description="Proton donor/acceptor" evidence="1">
    <location>
        <position position="118"/>
    </location>
</feature>
<feature type="active site" description="Schiff-base intermediate with substrate" evidence="1">
    <location>
        <position position="144"/>
    </location>
</feature>
<feature type="binding site" evidence="1">
    <location>
        <begin position="33"/>
        <end position="35"/>
    </location>
    <ligand>
        <name>3-dehydroquinate</name>
        <dbReference type="ChEBI" id="CHEBI:32364"/>
    </ligand>
</feature>
<feature type="binding site" evidence="1">
    <location>
        <position position="63"/>
    </location>
    <ligand>
        <name>3-dehydroquinate</name>
        <dbReference type="ChEBI" id="CHEBI:32364"/>
    </ligand>
</feature>
<feature type="binding site" evidence="1">
    <location>
        <position position="181"/>
    </location>
    <ligand>
        <name>3-dehydroquinate</name>
        <dbReference type="ChEBI" id="CHEBI:32364"/>
    </ligand>
</feature>
<feature type="binding site" evidence="1">
    <location>
        <position position="200"/>
    </location>
    <ligand>
        <name>3-dehydroquinate</name>
        <dbReference type="ChEBI" id="CHEBI:32364"/>
    </ligand>
</feature>
<feature type="binding site" evidence="1">
    <location>
        <position position="204"/>
    </location>
    <ligand>
        <name>3-dehydroquinate</name>
        <dbReference type="ChEBI" id="CHEBI:32364"/>
    </ligand>
</feature>
<accession>O26666</accession>
<reference key="1">
    <citation type="journal article" date="1997" name="J. Bacteriol.">
        <title>Complete genome sequence of Methanobacterium thermoautotrophicum deltaH: functional analysis and comparative genomics.</title>
        <authorList>
            <person name="Smith D.R."/>
            <person name="Doucette-Stamm L.A."/>
            <person name="Deloughery C."/>
            <person name="Lee H.-M."/>
            <person name="Dubois J."/>
            <person name="Aldredge T."/>
            <person name="Bashirzadeh R."/>
            <person name="Blakely D."/>
            <person name="Cook R."/>
            <person name="Gilbert K."/>
            <person name="Harrison D."/>
            <person name="Hoang L."/>
            <person name="Keagle P."/>
            <person name="Lumm W."/>
            <person name="Pothier B."/>
            <person name="Qiu D."/>
            <person name="Spadafora R."/>
            <person name="Vicare R."/>
            <person name="Wang Y."/>
            <person name="Wierzbowski J."/>
            <person name="Gibson R."/>
            <person name="Jiwani N."/>
            <person name="Caruso A."/>
            <person name="Bush D."/>
            <person name="Safer H."/>
            <person name="Patwell D."/>
            <person name="Prabhakar S."/>
            <person name="McDougall S."/>
            <person name="Shimer G."/>
            <person name="Goyal A."/>
            <person name="Pietrovski S."/>
            <person name="Church G.M."/>
            <person name="Daniels C.J."/>
            <person name="Mao J.-I."/>
            <person name="Rice P."/>
            <person name="Noelling J."/>
            <person name="Reeve J.N."/>
        </authorList>
    </citation>
    <scope>NUCLEOTIDE SEQUENCE [LARGE SCALE GENOMIC DNA]</scope>
    <source>
        <strain>ATCC 29096 / DSM 1053 / JCM 10044 / NBRC 100330 / Delta H</strain>
    </source>
</reference>